<feature type="chain" id="PRO_0000187783" description="Peptidyl-tRNA hydrolase">
    <location>
        <begin position="1"/>
        <end position="192"/>
    </location>
</feature>
<feature type="active site" description="Proton acceptor" evidence="1">
    <location>
        <position position="23"/>
    </location>
</feature>
<feature type="binding site" evidence="1">
    <location>
        <position position="18"/>
    </location>
    <ligand>
        <name>tRNA</name>
        <dbReference type="ChEBI" id="CHEBI:17843"/>
    </ligand>
</feature>
<feature type="binding site" evidence="1">
    <location>
        <position position="69"/>
    </location>
    <ligand>
        <name>tRNA</name>
        <dbReference type="ChEBI" id="CHEBI:17843"/>
    </ligand>
</feature>
<feature type="binding site" evidence="1">
    <location>
        <position position="71"/>
    </location>
    <ligand>
        <name>tRNA</name>
        <dbReference type="ChEBI" id="CHEBI:17843"/>
    </ligand>
</feature>
<feature type="binding site" evidence="1">
    <location>
        <position position="117"/>
    </location>
    <ligand>
        <name>tRNA</name>
        <dbReference type="ChEBI" id="CHEBI:17843"/>
    </ligand>
</feature>
<feature type="site" description="Discriminates between blocked and unblocked aminoacyl-tRNA" evidence="1">
    <location>
        <position position="13"/>
    </location>
</feature>
<feature type="site" description="Stabilizes the basic form of H active site to accept a proton" evidence="1">
    <location>
        <position position="96"/>
    </location>
</feature>
<comment type="function">
    <text evidence="1">Hydrolyzes ribosome-free peptidyl-tRNAs (with 1 or more amino acids incorporated), which drop off the ribosome during protein synthesis, or as a result of ribosome stalling.</text>
</comment>
<comment type="function">
    <text evidence="1">Catalyzes the release of premature peptidyl moieties from peptidyl-tRNA molecules trapped in stalled 50S ribosomal subunits, and thus maintains levels of free tRNAs and 50S ribosomes.</text>
</comment>
<comment type="catalytic activity">
    <reaction evidence="1">
        <text>an N-acyl-L-alpha-aminoacyl-tRNA + H2O = an N-acyl-L-amino acid + a tRNA + H(+)</text>
        <dbReference type="Rhea" id="RHEA:54448"/>
        <dbReference type="Rhea" id="RHEA-COMP:10123"/>
        <dbReference type="Rhea" id="RHEA-COMP:13883"/>
        <dbReference type="ChEBI" id="CHEBI:15377"/>
        <dbReference type="ChEBI" id="CHEBI:15378"/>
        <dbReference type="ChEBI" id="CHEBI:59874"/>
        <dbReference type="ChEBI" id="CHEBI:78442"/>
        <dbReference type="ChEBI" id="CHEBI:138191"/>
        <dbReference type="EC" id="3.1.1.29"/>
    </reaction>
</comment>
<comment type="subunit">
    <text evidence="1">Monomer.</text>
</comment>
<comment type="subcellular location">
    <subcellularLocation>
        <location evidence="1">Cytoplasm</location>
    </subcellularLocation>
</comment>
<comment type="similarity">
    <text evidence="1">Belongs to the PTH family.</text>
</comment>
<evidence type="ECO:0000255" key="1">
    <source>
        <dbReference type="HAMAP-Rule" id="MF_00083"/>
    </source>
</evidence>
<protein>
    <recommendedName>
        <fullName evidence="1">Peptidyl-tRNA hydrolase</fullName>
        <shortName evidence="1">Pth</shortName>
        <ecNumber evidence="1">3.1.1.29</ecNumber>
    </recommendedName>
</protein>
<sequence length="192" mass="21474">MSNTIKMVVGLGNPGKEYEQTRHNAGFWFLDELAWKWKASFKEEKKFFGEVARAALPDGDVWLLKPATFMNRSGQAVAALAQFYKIKPEEILVVHDELDIPCGRIKFKLGGGNGGHNGLKDIQAKLGTADYYRLRLGIGHPGDRNLVVGYVLNKPSTEHRRQIDDAVAKSLQAIPDILAGKWEEATRFLHSK</sequence>
<keyword id="KW-0963">Cytoplasm</keyword>
<keyword id="KW-0378">Hydrolase</keyword>
<keyword id="KW-1185">Reference proteome</keyword>
<keyword id="KW-0694">RNA-binding</keyword>
<keyword id="KW-0820">tRNA-binding</keyword>
<gene>
    <name evidence="1" type="primary">pth</name>
    <name type="ordered locus">NMB0795</name>
</gene>
<organism>
    <name type="scientific">Neisseria meningitidis serogroup B (strain ATCC BAA-335 / MC58)</name>
    <dbReference type="NCBI Taxonomy" id="122586"/>
    <lineage>
        <taxon>Bacteria</taxon>
        <taxon>Pseudomonadati</taxon>
        <taxon>Pseudomonadota</taxon>
        <taxon>Betaproteobacteria</taxon>
        <taxon>Neisseriales</taxon>
        <taxon>Neisseriaceae</taxon>
        <taxon>Neisseria</taxon>
    </lineage>
</organism>
<name>PTH_NEIMB</name>
<accession>Q9K029</accession>
<dbReference type="EC" id="3.1.1.29" evidence="1"/>
<dbReference type="EMBL" id="AE002098">
    <property type="protein sequence ID" value="AAF41208.1"/>
    <property type="molecule type" value="Genomic_DNA"/>
</dbReference>
<dbReference type="PIR" id="B81157">
    <property type="entry name" value="B81157"/>
</dbReference>
<dbReference type="RefSeq" id="NP_273837.1">
    <property type="nucleotide sequence ID" value="NC_003112.2"/>
</dbReference>
<dbReference type="RefSeq" id="WP_002221185.1">
    <property type="nucleotide sequence ID" value="NC_003112.2"/>
</dbReference>
<dbReference type="SMR" id="Q9K029"/>
<dbReference type="FunCoup" id="Q9K029">
    <property type="interactions" value="367"/>
</dbReference>
<dbReference type="STRING" id="122586.NMB0795"/>
<dbReference type="PaxDb" id="122586-NMB0795"/>
<dbReference type="KEGG" id="nme:NMB0795"/>
<dbReference type="PATRIC" id="fig|122586.8.peg.1007"/>
<dbReference type="HOGENOM" id="CLU_062456_3_1_4"/>
<dbReference type="InParanoid" id="Q9K029"/>
<dbReference type="OrthoDB" id="9800507at2"/>
<dbReference type="Proteomes" id="UP000000425">
    <property type="component" value="Chromosome"/>
</dbReference>
<dbReference type="GO" id="GO:0005737">
    <property type="term" value="C:cytoplasm"/>
    <property type="evidence" value="ECO:0007669"/>
    <property type="project" value="UniProtKB-SubCell"/>
</dbReference>
<dbReference type="GO" id="GO:0004045">
    <property type="term" value="F:peptidyl-tRNA hydrolase activity"/>
    <property type="evidence" value="ECO:0000318"/>
    <property type="project" value="GO_Central"/>
</dbReference>
<dbReference type="GO" id="GO:0000049">
    <property type="term" value="F:tRNA binding"/>
    <property type="evidence" value="ECO:0007669"/>
    <property type="project" value="UniProtKB-UniRule"/>
</dbReference>
<dbReference type="GO" id="GO:0006515">
    <property type="term" value="P:protein quality control for misfolded or incompletely synthesized proteins"/>
    <property type="evidence" value="ECO:0007669"/>
    <property type="project" value="UniProtKB-UniRule"/>
</dbReference>
<dbReference type="GO" id="GO:0072344">
    <property type="term" value="P:rescue of stalled ribosome"/>
    <property type="evidence" value="ECO:0007669"/>
    <property type="project" value="UniProtKB-UniRule"/>
</dbReference>
<dbReference type="CDD" id="cd00462">
    <property type="entry name" value="PTH"/>
    <property type="match status" value="1"/>
</dbReference>
<dbReference type="FunFam" id="3.40.50.1470:FF:000001">
    <property type="entry name" value="Peptidyl-tRNA hydrolase"/>
    <property type="match status" value="1"/>
</dbReference>
<dbReference type="Gene3D" id="3.40.50.1470">
    <property type="entry name" value="Peptidyl-tRNA hydrolase"/>
    <property type="match status" value="1"/>
</dbReference>
<dbReference type="HAMAP" id="MF_00083">
    <property type="entry name" value="Pept_tRNA_hydro_bact"/>
    <property type="match status" value="1"/>
</dbReference>
<dbReference type="InterPro" id="IPR001328">
    <property type="entry name" value="Pept_tRNA_hydro"/>
</dbReference>
<dbReference type="InterPro" id="IPR018171">
    <property type="entry name" value="Pept_tRNA_hydro_CS"/>
</dbReference>
<dbReference type="InterPro" id="IPR036416">
    <property type="entry name" value="Pept_tRNA_hydro_sf"/>
</dbReference>
<dbReference type="NCBIfam" id="TIGR00447">
    <property type="entry name" value="pth"/>
    <property type="match status" value="1"/>
</dbReference>
<dbReference type="PANTHER" id="PTHR17224">
    <property type="entry name" value="PEPTIDYL-TRNA HYDROLASE"/>
    <property type="match status" value="1"/>
</dbReference>
<dbReference type="PANTHER" id="PTHR17224:SF1">
    <property type="entry name" value="PEPTIDYL-TRNA HYDROLASE"/>
    <property type="match status" value="1"/>
</dbReference>
<dbReference type="Pfam" id="PF01195">
    <property type="entry name" value="Pept_tRNA_hydro"/>
    <property type="match status" value="1"/>
</dbReference>
<dbReference type="SUPFAM" id="SSF53178">
    <property type="entry name" value="Peptidyl-tRNA hydrolase-like"/>
    <property type="match status" value="1"/>
</dbReference>
<dbReference type="PROSITE" id="PS01195">
    <property type="entry name" value="PEPT_TRNA_HYDROL_1"/>
    <property type="match status" value="1"/>
</dbReference>
<dbReference type="PROSITE" id="PS01196">
    <property type="entry name" value="PEPT_TRNA_HYDROL_2"/>
    <property type="match status" value="1"/>
</dbReference>
<reference key="1">
    <citation type="journal article" date="2000" name="Science">
        <title>Complete genome sequence of Neisseria meningitidis serogroup B strain MC58.</title>
        <authorList>
            <person name="Tettelin H."/>
            <person name="Saunders N.J."/>
            <person name="Heidelberg J.F."/>
            <person name="Jeffries A.C."/>
            <person name="Nelson K.E."/>
            <person name="Eisen J.A."/>
            <person name="Ketchum K.A."/>
            <person name="Hood D.W."/>
            <person name="Peden J.F."/>
            <person name="Dodson R.J."/>
            <person name="Nelson W.C."/>
            <person name="Gwinn M.L."/>
            <person name="DeBoy R.T."/>
            <person name="Peterson J.D."/>
            <person name="Hickey E.K."/>
            <person name="Haft D.H."/>
            <person name="Salzberg S.L."/>
            <person name="White O."/>
            <person name="Fleischmann R.D."/>
            <person name="Dougherty B.A."/>
            <person name="Mason T.M."/>
            <person name="Ciecko A."/>
            <person name="Parksey D.S."/>
            <person name="Blair E."/>
            <person name="Cittone H."/>
            <person name="Clark E.B."/>
            <person name="Cotton M.D."/>
            <person name="Utterback T.R."/>
            <person name="Khouri H.M."/>
            <person name="Qin H."/>
            <person name="Vamathevan J.J."/>
            <person name="Gill J."/>
            <person name="Scarlato V."/>
            <person name="Masignani V."/>
            <person name="Pizza M."/>
            <person name="Grandi G."/>
            <person name="Sun L."/>
            <person name="Smith H.O."/>
            <person name="Fraser C.M."/>
            <person name="Moxon E.R."/>
            <person name="Rappuoli R."/>
            <person name="Venter J.C."/>
        </authorList>
    </citation>
    <scope>NUCLEOTIDE SEQUENCE [LARGE SCALE GENOMIC DNA]</scope>
    <source>
        <strain>ATCC BAA-335 / MC58</strain>
    </source>
</reference>
<proteinExistence type="inferred from homology"/>